<accession>Q891Z9</accession>
<name>QUEA_CLOTE</name>
<gene>
    <name evidence="1" type="primary">queA</name>
    <name type="ordered locus">CTC_02210</name>
</gene>
<evidence type="ECO:0000255" key="1">
    <source>
        <dbReference type="HAMAP-Rule" id="MF_00113"/>
    </source>
</evidence>
<evidence type="ECO:0000305" key="2"/>
<comment type="function">
    <text evidence="1">Transfers and isomerizes the ribose moiety from AdoMet to the 7-aminomethyl group of 7-deazaguanine (preQ1-tRNA) to give epoxyqueuosine (oQ-tRNA).</text>
</comment>
<comment type="catalytic activity">
    <reaction evidence="1">
        <text>7-aminomethyl-7-carbaguanosine(34) in tRNA + S-adenosyl-L-methionine = epoxyqueuosine(34) in tRNA + adenine + L-methionine + 2 H(+)</text>
        <dbReference type="Rhea" id="RHEA:32155"/>
        <dbReference type="Rhea" id="RHEA-COMP:10342"/>
        <dbReference type="Rhea" id="RHEA-COMP:18582"/>
        <dbReference type="ChEBI" id="CHEBI:15378"/>
        <dbReference type="ChEBI" id="CHEBI:16708"/>
        <dbReference type="ChEBI" id="CHEBI:57844"/>
        <dbReference type="ChEBI" id="CHEBI:59789"/>
        <dbReference type="ChEBI" id="CHEBI:82833"/>
        <dbReference type="ChEBI" id="CHEBI:194443"/>
        <dbReference type="EC" id="2.4.99.17"/>
    </reaction>
</comment>
<comment type="pathway">
    <text evidence="1">tRNA modification; tRNA-queuosine biosynthesis.</text>
</comment>
<comment type="subunit">
    <text evidence="1">Monomer.</text>
</comment>
<comment type="subcellular location">
    <subcellularLocation>
        <location evidence="1">Cytoplasm</location>
    </subcellularLocation>
</comment>
<comment type="similarity">
    <text evidence="1">Belongs to the QueA family.</text>
</comment>
<comment type="sequence caution" evidence="2">
    <conflict type="erroneous initiation">
        <sequence resource="EMBL-CDS" id="AAO36696"/>
    </conflict>
</comment>
<proteinExistence type="inferred from homology"/>
<protein>
    <recommendedName>
        <fullName evidence="1">S-adenosylmethionine:tRNA ribosyltransferase-isomerase</fullName>
        <ecNumber evidence="1">2.4.99.17</ecNumber>
    </recommendedName>
    <alternativeName>
        <fullName evidence="1">Queuosine biosynthesis protein QueA</fullName>
    </alternativeName>
</protein>
<feature type="chain" id="PRO_0000165397" description="S-adenosylmethionine:tRNA ribosyltransferase-isomerase">
    <location>
        <begin position="1"/>
        <end position="341"/>
    </location>
</feature>
<sequence>MKAKDFDYYLPEELIAQHPLEKRDECRLMVLDKETGHVEHKVFKDILDYLNKGDCLVLNDTRVMPARLIGEKEETKGKMEFLLLKRTDKDTWETLVKPGKRAKIGSRFIFGQGELKAEVIGMAEEGSRIVKFEYDGIFEEVLDRLGQMPLPPYITEKLEDKEKYQTVYSKESGSAAAPTAGLHFTEELLNKIKEKGIKIVFLTLHVGLGTFRPVKEGEIENHIMHSEYYCISKETADIINTTKEAGGRVIAVGTTSCRTLETLGSKHGKIIEDSGWTNIFMYPGYEFKVTDALITNFHLPQSTLIMLVSALSERERVLNAYEIAVREKYRFFSFGDAMFVK</sequence>
<keyword id="KW-0963">Cytoplasm</keyword>
<keyword id="KW-0671">Queuosine biosynthesis</keyword>
<keyword id="KW-1185">Reference proteome</keyword>
<keyword id="KW-0949">S-adenosyl-L-methionine</keyword>
<keyword id="KW-0808">Transferase</keyword>
<reference key="1">
    <citation type="journal article" date="2003" name="Proc. Natl. Acad. Sci. U.S.A.">
        <title>The genome sequence of Clostridium tetani, the causative agent of tetanus disease.</title>
        <authorList>
            <person name="Brueggemann H."/>
            <person name="Baeumer S."/>
            <person name="Fricke W.F."/>
            <person name="Wiezer A."/>
            <person name="Liesegang H."/>
            <person name="Decker I."/>
            <person name="Herzberg C."/>
            <person name="Martinez-Arias R."/>
            <person name="Merkl R."/>
            <person name="Henne A."/>
            <person name="Gottschalk G."/>
        </authorList>
    </citation>
    <scope>NUCLEOTIDE SEQUENCE [LARGE SCALE GENOMIC DNA]</scope>
    <source>
        <strain>Massachusetts / E88</strain>
    </source>
</reference>
<dbReference type="EC" id="2.4.99.17" evidence="1"/>
<dbReference type="EMBL" id="AE015927">
    <property type="protein sequence ID" value="AAO36696.1"/>
    <property type="status" value="ALT_INIT"/>
    <property type="molecule type" value="Genomic_DNA"/>
</dbReference>
<dbReference type="RefSeq" id="WP_035109039.1">
    <property type="nucleotide sequence ID" value="NC_004557.1"/>
</dbReference>
<dbReference type="SMR" id="Q891Z9"/>
<dbReference type="STRING" id="212717.CTC_02210"/>
<dbReference type="GeneID" id="24253855"/>
<dbReference type="KEGG" id="ctc:CTC_02210"/>
<dbReference type="HOGENOM" id="CLU_039110_1_0_9"/>
<dbReference type="OrthoDB" id="9805933at2"/>
<dbReference type="UniPathway" id="UPA00392"/>
<dbReference type="Proteomes" id="UP000001412">
    <property type="component" value="Chromosome"/>
</dbReference>
<dbReference type="GO" id="GO:0005737">
    <property type="term" value="C:cytoplasm"/>
    <property type="evidence" value="ECO:0007669"/>
    <property type="project" value="UniProtKB-SubCell"/>
</dbReference>
<dbReference type="GO" id="GO:0051075">
    <property type="term" value="F:S-adenosylmethionine:tRNA ribosyltransferase-isomerase activity"/>
    <property type="evidence" value="ECO:0007669"/>
    <property type="project" value="UniProtKB-EC"/>
</dbReference>
<dbReference type="GO" id="GO:0008616">
    <property type="term" value="P:queuosine biosynthetic process"/>
    <property type="evidence" value="ECO:0007669"/>
    <property type="project" value="UniProtKB-UniRule"/>
</dbReference>
<dbReference type="GO" id="GO:0002099">
    <property type="term" value="P:tRNA wobble guanine modification"/>
    <property type="evidence" value="ECO:0007669"/>
    <property type="project" value="TreeGrafter"/>
</dbReference>
<dbReference type="FunFam" id="2.40.10.240:FF:000002">
    <property type="entry name" value="S-adenosylmethionine:tRNA ribosyltransferase-isomerase"/>
    <property type="match status" value="1"/>
</dbReference>
<dbReference type="FunFam" id="3.40.1780.10:FF:000001">
    <property type="entry name" value="S-adenosylmethionine:tRNA ribosyltransferase-isomerase"/>
    <property type="match status" value="1"/>
</dbReference>
<dbReference type="Gene3D" id="2.40.10.240">
    <property type="entry name" value="QueA-like"/>
    <property type="match status" value="1"/>
</dbReference>
<dbReference type="Gene3D" id="3.40.1780.10">
    <property type="entry name" value="QueA-like"/>
    <property type="match status" value="1"/>
</dbReference>
<dbReference type="HAMAP" id="MF_00113">
    <property type="entry name" value="QueA"/>
    <property type="match status" value="1"/>
</dbReference>
<dbReference type="InterPro" id="IPR003699">
    <property type="entry name" value="QueA"/>
</dbReference>
<dbReference type="InterPro" id="IPR042118">
    <property type="entry name" value="QueA_dom1"/>
</dbReference>
<dbReference type="InterPro" id="IPR042119">
    <property type="entry name" value="QueA_dom2"/>
</dbReference>
<dbReference type="InterPro" id="IPR036100">
    <property type="entry name" value="QueA_sf"/>
</dbReference>
<dbReference type="NCBIfam" id="NF001140">
    <property type="entry name" value="PRK00147.1"/>
    <property type="match status" value="1"/>
</dbReference>
<dbReference type="NCBIfam" id="TIGR00113">
    <property type="entry name" value="queA"/>
    <property type="match status" value="1"/>
</dbReference>
<dbReference type="PANTHER" id="PTHR30307">
    <property type="entry name" value="S-ADENOSYLMETHIONINE:TRNA RIBOSYLTRANSFERASE-ISOMERASE"/>
    <property type="match status" value="1"/>
</dbReference>
<dbReference type="PANTHER" id="PTHR30307:SF0">
    <property type="entry name" value="S-ADENOSYLMETHIONINE:TRNA RIBOSYLTRANSFERASE-ISOMERASE"/>
    <property type="match status" value="1"/>
</dbReference>
<dbReference type="Pfam" id="PF02547">
    <property type="entry name" value="Queuosine_synth"/>
    <property type="match status" value="1"/>
</dbReference>
<dbReference type="SUPFAM" id="SSF111337">
    <property type="entry name" value="QueA-like"/>
    <property type="match status" value="1"/>
</dbReference>
<organism>
    <name type="scientific">Clostridium tetani (strain Massachusetts / E88)</name>
    <dbReference type="NCBI Taxonomy" id="212717"/>
    <lineage>
        <taxon>Bacteria</taxon>
        <taxon>Bacillati</taxon>
        <taxon>Bacillota</taxon>
        <taxon>Clostridia</taxon>
        <taxon>Eubacteriales</taxon>
        <taxon>Clostridiaceae</taxon>
        <taxon>Clostridium</taxon>
    </lineage>
</organism>